<dbReference type="EC" id="3.1.1.29" evidence="1"/>
<dbReference type="EMBL" id="AP006840">
    <property type="protein sequence ID" value="BAD42220.1"/>
    <property type="molecule type" value="Genomic_DNA"/>
</dbReference>
<dbReference type="RefSeq" id="WP_011197351.1">
    <property type="nucleotide sequence ID" value="NC_006177.1"/>
</dbReference>
<dbReference type="SMR" id="Q67JD0"/>
<dbReference type="STRING" id="292459.STH3238"/>
<dbReference type="KEGG" id="sth:STH3238"/>
<dbReference type="eggNOG" id="COG0193">
    <property type="taxonomic scope" value="Bacteria"/>
</dbReference>
<dbReference type="HOGENOM" id="CLU_062456_4_1_9"/>
<dbReference type="OrthoDB" id="9800507at2"/>
<dbReference type="Proteomes" id="UP000000417">
    <property type="component" value="Chromosome"/>
</dbReference>
<dbReference type="GO" id="GO:0005737">
    <property type="term" value="C:cytoplasm"/>
    <property type="evidence" value="ECO:0007669"/>
    <property type="project" value="UniProtKB-SubCell"/>
</dbReference>
<dbReference type="GO" id="GO:0004045">
    <property type="term" value="F:peptidyl-tRNA hydrolase activity"/>
    <property type="evidence" value="ECO:0007669"/>
    <property type="project" value="UniProtKB-UniRule"/>
</dbReference>
<dbReference type="GO" id="GO:0000049">
    <property type="term" value="F:tRNA binding"/>
    <property type="evidence" value="ECO:0007669"/>
    <property type="project" value="UniProtKB-UniRule"/>
</dbReference>
<dbReference type="GO" id="GO:0006515">
    <property type="term" value="P:protein quality control for misfolded or incompletely synthesized proteins"/>
    <property type="evidence" value="ECO:0007669"/>
    <property type="project" value="UniProtKB-UniRule"/>
</dbReference>
<dbReference type="GO" id="GO:0072344">
    <property type="term" value="P:rescue of stalled ribosome"/>
    <property type="evidence" value="ECO:0007669"/>
    <property type="project" value="UniProtKB-UniRule"/>
</dbReference>
<dbReference type="CDD" id="cd00462">
    <property type="entry name" value="PTH"/>
    <property type="match status" value="1"/>
</dbReference>
<dbReference type="FunFam" id="3.40.50.1470:FF:000001">
    <property type="entry name" value="Peptidyl-tRNA hydrolase"/>
    <property type="match status" value="1"/>
</dbReference>
<dbReference type="Gene3D" id="3.40.50.1470">
    <property type="entry name" value="Peptidyl-tRNA hydrolase"/>
    <property type="match status" value="1"/>
</dbReference>
<dbReference type="HAMAP" id="MF_00083">
    <property type="entry name" value="Pept_tRNA_hydro_bact"/>
    <property type="match status" value="1"/>
</dbReference>
<dbReference type="InterPro" id="IPR001328">
    <property type="entry name" value="Pept_tRNA_hydro"/>
</dbReference>
<dbReference type="InterPro" id="IPR018171">
    <property type="entry name" value="Pept_tRNA_hydro_CS"/>
</dbReference>
<dbReference type="InterPro" id="IPR036416">
    <property type="entry name" value="Pept_tRNA_hydro_sf"/>
</dbReference>
<dbReference type="NCBIfam" id="TIGR00447">
    <property type="entry name" value="pth"/>
    <property type="match status" value="1"/>
</dbReference>
<dbReference type="PANTHER" id="PTHR17224">
    <property type="entry name" value="PEPTIDYL-TRNA HYDROLASE"/>
    <property type="match status" value="1"/>
</dbReference>
<dbReference type="PANTHER" id="PTHR17224:SF1">
    <property type="entry name" value="PEPTIDYL-TRNA HYDROLASE"/>
    <property type="match status" value="1"/>
</dbReference>
<dbReference type="Pfam" id="PF01195">
    <property type="entry name" value="Pept_tRNA_hydro"/>
    <property type="match status" value="1"/>
</dbReference>
<dbReference type="SUPFAM" id="SSF53178">
    <property type="entry name" value="Peptidyl-tRNA hydrolase-like"/>
    <property type="match status" value="1"/>
</dbReference>
<dbReference type="PROSITE" id="PS01195">
    <property type="entry name" value="PEPT_TRNA_HYDROL_1"/>
    <property type="match status" value="1"/>
</dbReference>
<dbReference type="PROSITE" id="PS01196">
    <property type="entry name" value="PEPT_TRNA_HYDROL_2"/>
    <property type="match status" value="1"/>
</dbReference>
<evidence type="ECO:0000255" key="1">
    <source>
        <dbReference type="HAMAP-Rule" id="MF_00083"/>
    </source>
</evidence>
<sequence length="189" mass="20391">MAKLIVGLGNPGPRYAATRHNAGWMLLDAFARKHGVAIEQRGFEGLYGELRWGAEAEKVILLKPLTYMNLSGRSVAQAARFYRIAPADILVLFDDLDLEPGRLRLRAKGSAGGHNGVKSVIAELGTAEFPRLRIGIGRPAPGWEVIDWVLAPFGPDDAAAVAAALPRAVEAVECFLTEGILAAMNRYNT</sequence>
<comment type="function">
    <text evidence="1">Hydrolyzes ribosome-free peptidyl-tRNAs (with 1 or more amino acids incorporated), which drop off the ribosome during protein synthesis, or as a result of ribosome stalling.</text>
</comment>
<comment type="function">
    <text evidence="1">Catalyzes the release of premature peptidyl moieties from peptidyl-tRNA molecules trapped in stalled 50S ribosomal subunits, and thus maintains levels of free tRNAs and 50S ribosomes.</text>
</comment>
<comment type="catalytic activity">
    <reaction evidence="1">
        <text>an N-acyl-L-alpha-aminoacyl-tRNA + H2O = an N-acyl-L-amino acid + a tRNA + H(+)</text>
        <dbReference type="Rhea" id="RHEA:54448"/>
        <dbReference type="Rhea" id="RHEA-COMP:10123"/>
        <dbReference type="Rhea" id="RHEA-COMP:13883"/>
        <dbReference type="ChEBI" id="CHEBI:15377"/>
        <dbReference type="ChEBI" id="CHEBI:15378"/>
        <dbReference type="ChEBI" id="CHEBI:59874"/>
        <dbReference type="ChEBI" id="CHEBI:78442"/>
        <dbReference type="ChEBI" id="CHEBI:138191"/>
        <dbReference type="EC" id="3.1.1.29"/>
    </reaction>
</comment>
<comment type="subunit">
    <text evidence="1">Monomer.</text>
</comment>
<comment type="subcellular location">
    <subcellularLocation>
        <location evidence="1">Cytoplasm</location>
    </subcellularLocation>
</comment>
<comment type="similarity">
    <text evidence="1">Belongs to the PTH family.</text>
</comment>
<reference key="1">
    <citation type="journal article" date="2004" name="Nucleic Acids Res.">
        <title>Genome sequence of Symbiobacterium thermophilum, an uncultivable bacterium that depends on microbial commensalism.</title>
        <authorList>
            <person name="Ueda K."/>
            <person name="Yamashita A."/>
            <person name="Ishikawa J."/>
            <person name="Shimada M."/>
            <person name="Watsuji T."/>
            <person name="Morimura K."/>
            <person name="Ikeda H."/>
            <person name="Hattori M."/>
            <person name="Beppu T."/>
        </authorList>
    </citation>
    <scope>NUCLEOTIDE SEQUENCE [LARGE SCALE GENOMIC DNA]</scope>
    <source>
        <strain>DSM 24528 / JCM 14929 / IAM 14863 / T</strain>
    </source>
</reference>
<feature type="chain" id="PRO_0000187836" description="Peptidyl-tRNA hydrolase">
    <location>
        <begin position="1"/>
        <end position="189"/>
    </location>
</feature>
<feature type="active site" description="Proton acceptor" evidence="1">
    <location>
        <position position="20"/>
    </location>
</feature>
<feature type="binding site" evidence="1">
    <location>
        <position position="15"/>
    </location>
    <ligand>
        <name>tRNA</name>
        <dbReference type="ChEBI" id="CHEBI:17843"/>
    </ligand>
</feature>
<feature type="binding site" evidence="1">
    <location>
        <position position="67"/>
    </location>
    <ligand>
        <name>tRNA</name>
        <dbReference type="ChEBI" id="CHEBI:17843"/>
    </ligand>
</feature>
<feature type="binding site" evidence="1">
    <location>
        <position position="69"/>
    </location>
    <ligand>
        <name>tRNA</name>
        <dbReference type="ChEBI" id="CHEBI:17843"/>
    </ligand>
</feature>
<feature type="binding site" evidence="1">
    <location>
        <position position="115"/>
    </location>
    <ligand>
        <name>tRNA</name>
        <dbReference type="ChEBI" id="CHEBI:17843"/>
    </ligand>
</feature>
<feature type="site" description="Discriminates between blocked and unblocked aminoacyl-tRNA" evidence="1">
    <location>
        <position position="10"/>
    </location>
</feature>
<feature type="site" description="Stabilizes the basic form of H active site to accept a proton" evidence="1">
    <location>
        <position position="94"/>
    </location>
</feature>
<gene>
    <name evidence="1" type="primary">pth</name>
    <name type="ordered locus">STH3238</name>
</gene>
<name>PTH_SYMTH</name>
<accession>Q67JD0</accession>
<protein>
    <recommendedName>
        <fullName evidence="1">Peptidyl-tRNA hydrolase</fullName>
        <shortName evidence="1">Pth</shortName>
        <ecNumber evidence="1">3.1.1.29</ecNumber>
    </recommendedName>
</protein>
<organism>
    <name type="scientific">Symbiobacterium thermophilum (strain DSM 24528 / JCM 14929 / IAM 14863 / T)</name>
    <dbReference type="NCBI Taxonomy" id="292459"/>
    <lineage>
        <taxon>Bacteria</taxon>
        <taxon>Bacillati</taxon>
        <taxon>Bacillota</taxon>
        <taxon>Clostridia</taxon>
        <taxon>Eubacteriales</taxon>
        <taxon>Symbiobacteriaceae</taxon>
        <taxon>Symbiobacterium</taxon>
    </lineage>
</organism>
<proteinExistence type="inferred from homology"/>
<keyword id="KW-0963">Cytoplasm</keyword>
<keyword id="KW-0378">Hydrolase</keyword>
<keyword id="KW-1185">Reference proteome</keyword>
<keyword id="KW-0694">RNA-binding</keyword>
<keyword id="KW-0820">tRNA-binding</keyword>